<feature type="initiator methionine" description="Removed" evidence="1">
    <location>
        <position position="1"/>
    </location>
</feature>
<feature type="chain" id="PRO_0000221346" description="Histone H3.2">
    <location>
        <begin position="2"/>
        <end position="41" status="greater than"/>
    </location>
</feature>
<feature type="region of interest" description="Disordered" evidence="2">
    <location>
        <begin position="1"/>
        <end position="41"/>
    </location>
</feature>
<feature type="non-terminal residue">
    <location>
        <position position="41"/>
    </location>
</feature>
<evidence type="ECO:0000250" key="1"/>
<evidence type="ECO:0000256" key="2">
    <source>
        <dbReference type="SAM" id="MobiDB-lite"/>
    </source>
</evidence>
<evidence type="ECO:0000305" key="3"/>
<protein>
    <recommendedName>
        <fullName>Histone H3.2</fullName>
    </recommendedName>
</protein>
<dbReference type="EMBL" id="X17139">
    <property type="protein sequence ID" value="CAA35012.1"/>
    <property type="molecule type" value="Genomic_DNA"/>
</dbReference>
<dbReference type="GO" id="GO:0000786">
    <property type="term" value="C:nucleosome"/>
    <property type="evidence" value="ECO:0007669"/>
    <property type="project" value="UniProtKB-KW"/>
</dbReference>
<dbReference type="GO" id="GO:0005634">
    <property type="term" value="C:nucleus"/>
    <property type="evidence" value="ECO:0007669"/>
    <property type="project" value="UniProtKB-SubCell"/>
</dbReference>
<dbReference type="GO" id="GO:0003677">
    <property type="term" value="F:DNA binding"/>
    <property type="evidence" value="ECO:0007669"/>
    <property type="project" value="UniProtKB-KW"/>
</dbReference>
<dbReference type="GO" id="GO:0046982">
    <property type="term" value="F:protein heterodimerization activity"/>
    <property type="evidence" value="ECO:0007669"/>
    <property type="project" value="InterPro"/>
</dbReference>
<dbReference type="GO" id="GO:0030527">
    <property type="term" value="F:structural constituent of chromatin"/>
    <property type="evidence" value="ECO:0007669"/>
    <property type="project" value="InterPro"/>
</dbReference>
<dbReference type="Gene3D" id="1.10.20.10">
    <property type="entry name" value="Histone, subunit A"/>
    <property type="match status" value="1"/>
</dbReference>
<dbReference type="InterPro" id="IPR009072">
    <property type="entry name" value="Histone-fold"/>
</dbReference>
<dbReference type="InterPro" id="IPR000164">
    <property type="entry name" value="Histone_H3/CENP-A"/>
</dbReference>
<dbReference type="PANTHER" id="PTHR11426">
    <property type="entry name" value="HISTONE H3"/>
    <property type="match status" value="1"/>
</dbReference>
<dbReference type="PRINTS" id="PR00622">
    <property type="entry name" value="HISTONEH3"/>
</dbReference>
<dbReference type="SUPFAM" id="SSF47113">
    <property type="entry name" value="Histone-fold"/>
    <property type="match status" value="1"/>
</dbReference>
<dbReference type="PROSITE" id="PS00322">
    <property type="entry name" value="HISTONE_H3_1"/>
    <property type="match status" value="1"/>
</dbReference>
<sequence length="41" mass="4343">MARTKQTARKSTGAKAPRKQLASKAARKSAPATGGIKKPHR</sequence>
<proteinExistence type="inferred from homology"/>
<organism>
    <name type="scientific">Tetrahymena paravorax</name>
    <dbReference type="NCBI Taxonomy" id="5905"/>
    <lineage>
        <taxon>Eukaryota</taxon>
        <taxon>Sar</taxon>
        <taxon>Alveolata</taxon>
        <taxon>Ciliophora</taxon>
        <taxon>Intramacronucleata</taxon>
        <taxon>Oligohymenophorea</taxon>
        <taxon>Hymenostomatida</taxon>
        <taxon>Tetrahymenina</taxon>
        <taxon>Tetrahymenidae</taxon>
        <taxon>Tetrahymena</taxon>
    </lineage>
</organism>
<comment type="function">
    <text>Core component of nucleosome. Nucleosomes wrap and compact DNA into chromatin, limiting DNA accessibility to the cellular machineries which require DNA as a template. Histones thereby play a central role in transcription regulation, DNA repair, DNA replication and chromosomal stability. DNA accessibility is regulated via a complex set of post-translational modifications of histones, also called histone code, and nucleosome remodeling.</text>
</comment>
<comment type="subunit">
    <text>The nucleosome is a histone octamer containing two molecules each of H2A, H2B, H3 and H4 assembled in one H3-H4 heterotetramer and two H2A-H2B heterodimers. The octamer wraps approximately 147 bp of DNA.</text>
</comment>
<comment type="subcellular location">
    <subcellularLocation>
        <location evidence="1">Nucleus</location>
    </subcellularLocation>
    <subcellularLocation>
        <location evidence="1">Chromosome</location>
    </subcellularLocation>
</comment>
<comment type="similarity">
    <text evidence="3">Belongs to the histone H3 family.</text>
</comment>
<keyword id="KW-0158">Chromosome</keyword>
<keyword id="KW-0238">DNA-binding</keyword>
<keyword id="KW-0544">Nucleosome core</keyword>
<keyword id="KW-0539">Nucleus</keyword>
<accession>P69122</accession>
<accession>P17705</accession>
<name>H32_TETPR</name>
<reference key="1">
    <citation type="journal article" date="1990" name="Nucleic Acids Res.">
        <title>Characterization of the promoter region of Tetrahymena genes.</title>
        <authorList>
            <person name="Brunk C.F."/>
            <person name="Sadler L.A."/>
        </authorList>
    </citation>
    <scope>NUCLEOTIDE SEQUENCE [GENOMIC DNA]</scope>
</reference>
<reference key="2">
    <citation type="journal article" date="1990" name="J. Mol. Evol.">
        <title>Phylogenetic relationships among Tetrahymena species determined using the polymerase chain reaction.</title>
        <authorList>
            <person name="Brunk C.F."/>
            <person name="Kahn R.W."/>
            <person name="Sadler L.A."/>
        </authorList>
    </citation>
    <scope>NUCLEOTIDE SEQUENCE [GENOMIC DNA]</scope>
</reference>